<gene>
    <name evidence="5" type="primary">sfc9</name>
    <name type="ORF">SPBC8D2.07c</name>
</gene>
<proteinExistence type="predicted"/>
<evidence type="ECO:0000250" key="1">
    <source>
        <dbReference type="UniProtKB" id="O60174"/>
    </source>
</evidence>
<evidence type="ECO:0000269" key="2">
    <source>
    </source>
</evidence>
<evidence type="ECO:0000305" key="3"/>
<evidence type="ECO:0000312" key="4">
    <source>
        <dbReference type="EMBL" id="BAA21438.1"/>
    </source>
</evidence>
<evidence type="ECO:0000312" key="5">
    <source>
        <dbReference type="EMBL" id="CAA17822.2"/>
    </source>
</evidence>
<accession>O13650</accession>
<accession>O43074</accession>
<accession>Q7LWE0</accession>
<protein>
    <recommendedName>
        <fullName>Putative transcription factor tau subunit sfc9</fullName>
    </recommendedName>
    <alternativeName>
        <fullName evidence="1">TFIIIC subunit sfc9</fullName>
    </alternativeName>
    <alternativeName>
        <fullName evidence="1">Transcription factor C subunit 9</fullName>
    </alternativeName>
</protein>
<reference evidence="4" key="1">
    <citation type="journal article" date="2000" name="Yeast">
        <title>A 38 kb segment containing the cdc2 gene from the left arm of fission yeast chromosome II: sequence analysis and characterization of the genomic DNA and cDNAs encoded on the segment.</title>
        <authorList>
            <person name="Machida M."/>
            <person name="Yamazaki S."/>
            <person name="Kunihiro S."/>
            <person name="Tanaka T."/>
            <person name="Kushida N."/>
            <person name="Jinno K."/>
            <person name="Haikawa Y."/>
            <person name="Yamazaki J."/>
            <person name="Yamamoto S."/>
            <person name="Sekine M."/>
            <person name="Oguchi A."/>
            <person name="Nagai Y."/>
            <person name="Sakai M."/>
            <person name="Aoki K."/>
            <person name="Ogura K."/>
            <person name="Kudoh Y."/>
            <person name="Kikuchi H."/>
            <person name="Zhang M.Q."/>
            <person name="Yanagida M."/>
        </authorList>
    </citation>
    <scope>NUCLEOTIDE SEQUENCE [LARGE SCALE GENOMIC DNA]</scope>
    <source>
        <strain>972 / ATCC 24843</strain>
    </source>
</reference>
<reference evidence="5" key="2">
    <citation type="journal article" date="2002" name="Nature">
        <title>The genome sequence of Schizosaccharomyces pombe.</title>
        <authorList>
            <person name="Wood V."/>
            <person name="Gwilliam R."/>
            <person name="Rajandream M.A."/>
            <person name="Lyne M.H."/>
            <person name="Lyne R."/>
            <person name="Stewart A."/>
            <person name="Sgouros J.G."/>
            <person name="Peat N."/>
            <person name="Hayles J."/>
            <person name="Baker S.G."/>
            <person name="Basham D."/>
            <person name="Bowman S."/>
            <person name="Brooks K."/>
            <person name="Brown D."/>
            <person name="Brown S."/>
            <person name="Chillingworth T."/>
            <person name="Churcher C.M."/>
            <person name="Collins M."/>
            <person name="Connor R."/>
            <person name="Cronin A."/>
            <person name="Davis P."/>
            <person name="Feltwell T."/>
            <person name="Fraser A."/>
            <person name="Gentles S."/>
            <person name="Goble A."/>
            <person name="Hamlin N."/>
            <person name="Harris D.E."/>
            <person name="Hidalgo J."/>
            <person name="Hodgson G."/>
            <person name="Holroyd S."/>
            <person name="Hornsby T."/>
            <person name="Howarth S."/>
            <person name="Huckle E.J."/>
            <person name="Hunt S."/>
            <person name="Jagels K."/>
            <person name="James K.D."/>
            <person name="Jones L."/>
            <person name="Jones M."/>
            <person name="Leather S."/>
            <person name="McDonald S."/>
            <person name="McLean J."/>
            <person name="Mooney P."/>
            <person name="Moule S."/>
            <person name="Mungall K.L."/>
            <person name="Murphy L.D."/>
            <person name="Niblett D."/>
            <person name="Odell C."/>
            <person name="Oliver K."/>
            <person name="O'Neil S."/>
            <person name="Pearson D."/>
            <person name="Quail M.A."/>
            <person name="Rabbinowitsch E."/>
            <person name="Rutherford K.M."/>
            <person name="Rutter S."/>
            <person name="Saunders D."/>
            <person name="Seeger K."/>
            <person name="Sharp S."/>
            <person name="Skelton J."/>
            <person name="Simmonds M.N."/>
            <person name="Squares R."/>
            <person name="Squares S."/>
            <person name="Stevens K."/>
            <person name="Taylor K."/>
            <person name="Taylor R.G."/>
            <person name="Tivey A."/>
            <person name="Walsh S.V."/>
            <person name="Warren T."/>
            <person name="Whitehead S."/>
            <person name="Woodward J.R."/>
            <person name="Volckaert G."/>
            <person name="Aert R."/>
            <person name="Robben J."/>
            <person name="Grymonprez B."/>
            <person name="Weltjens I."/>
            <person name="Vanstreels E."/>
            <person name="Rieger M."/>
            <person name="Schaefer M."/>
            <person name="Mueller-Auer S."/>
            <person name="Gabel C."/>
            <person name="Fuchs M."/>
            <person name="Duesterhoeft A."/>
            <person name="Fritzc C."/>
            <person name="Holzer E."/>
            <person name="Moestl D."/>
            <person name="Hilbert H."/>
            <person name="Borzym K."/>
            <person name="Langer I."/>
            <person name="Beck A."/>
            <person name="Lehrach H."/>
            <person name="Reinhardt R."/>
            <person name="Pohl T.M."/>
            <person name="Eger P."/>
            <person name="Zimmermann W."/>
            <person name="Wedler H."/>
            <person name="Wambutt R."/>
            <person name="Purnelle B."/>
            <person name="Goffeau A."/>
            <person name="Cadieu E."/>
            <person name="Dreano S."/>
            <person name="Gloux S."/>
            <person name="Lelaure V."/>
            <person name="Mottier S."/>
            <person name="Galibert F."/>
            <person name="Aves S.J."/>
            <person name="Xiang Z."/>
            <person name="Hunt C."/>
            <person name="Moore K."/>
            <person name="Hurst S.M."/>
            <person name="Lucas M."/>
            <person name="Rochet M."/>
            <person name="Gaillardin C."/>
            <person name="Tallada V.A."/>
            <person name="Garzon A."/>
            <person name="Thode G."/>
            <person name="Daga R.R."/>
            <person name="Cruzado L."/>
            <person name="Jimenez J."/>
            <person name="Sanchez M."/>
            <person name="del Rey F."/>
            <person name="Benito J."/>
            <person name="Dominguez A."/>
            <person name="Revuelta J.L."/>
            <person name="Moreno S."/>
            <person name="Armstrong J."/>
            <person name="Forsburg S.L."/>
            <person name="Cerutti L."/>
            <person name="Lowe T."/>
            <person name="McCombie W.R."/>
            <person name="Paulsen I."/>
            <person name="Potashkin J."/>
            <person name="Shpakovski G.V."/>
            <person name="Ussery D."/>
            <person name="Barrell B.G."/>
            <person name="Nurse P."/>
        </authorList>
    </citation>
    <scope>NUCLEOTIDE SEQUENCE [LARGE SCALE GENOMIC DNA]</scope>
    <source>
        <strain>972 / ATCC 24843</strain>
    </source>
</reference>
<reference evidence="3" key="3">
    <citation type="journal article" date="2006" name="Nat. Biotechnol.">
        <title>ORFeome cloning and global analysis of protein localization in the fission yeast Schizosaccharomyces pombe.</title>
        <authorList>
            <person name="Matsuyama A."/>
            <person name="Arai R."/>
            <person name="Yashiroda Y."/>
            <person name="Shirai A."/>
            <person name="Kamata A."/>
            <person name="Sekido S."/>
            <person name="Kobayashi Y."/>
            <person name="Hashimoto A."/>
            <person name="Hamamoto M."/>
            <person name="Hiraoka Y."/>
            <person name="Horinouchi S."/>
            <person name="Yoshida M."/>
        </authorList>
    </citation>
    <scope>SUBCELLULAR LOCATION [LARGE SCALE ANALYSIS]</scope>
</reference>
<dbReference type="EMBL" id="AB004538">
    <property type="protein sequence ID" value="BAA21438.1"/>
    <property type="status" value="ALT_SEQ"/>
    <property type="molecule type" value="Genomic_DNA"/>
</dbReference>
<dbReference type="EMBL" id="CU329671">
    <property type="protein sequence ID" value="CAA17822.2"/>
    <property type="molecule type" value="Genomic_DNA"/>
</dbReference>
<dbReference type="PIR" id="T40752">
    <property type="entry name" value="T40752"/>
</dbReference>
<dbReference type="RefSeq" id="NP_595570.1">
    <property type="nucleotide sequence ID" value="NM_001021465.2"/>
</dbReference>
<dbReference type="BioGRID" id="277767">
    <property type="interactions" value="6"/>
</dbReference>
<dbReference type="ComplexPortal" id="CPX-8903">
    <property type="entry name" value="General transcription factor TFIIIC complex"/>
</dbReference>
<dbReference type="FunCoup" id="O13650">
    <property type="interactions" value="5"/>
</dbReference>
<dbReference type="STRING" id="284812.O13650"/>
<dbReference type="iPTMnet" id="O13650"/>
<dbReference type="PaxDb" id="4896-SPBC8D2.07c.1"/>
<dbReference type="EnsemblFungi" id="SPBC8D2.07c.1">
    <property type="protein sequence ID" value="SPBC8D2.07c.1:pep"/>
    <property type="gene ID" value="SPBC8D2.07c"/>
</dbReference>
<dbReference type="GeneID" id="2541253"/>
<dbReference type="KEGG" id="spo:2541253"/>
<dbReference type="PomBase" id="SPBC8D2.07c">
    <property type="gene designation" value="sfc9"/>
</dbReference>
<dbReference type="VEuPathDB" id="FungiDB:SPBC8D2.07c"/>
<dbReference type="eggNOG" id="ENOG502S7UK">
    <property type="taxonomic scope" value="Eukaryota"/>
</dbReference>
<dbReference type="HOGENOM" id="CLU_432896_0_0_1"/>
<dbReference type="InParanoid" id="O13650"/>
<dbReference type="OMA" id="EERRMEC"/>
<dbReference type="Reactome" id="R-SPO-76061">
    <property type="pathway name" value="RNA Polymerase III Transcription Initiation From Type 1 Promoter"/>
</dbReference>
<dbReference type="Reactome" id="R-SPO-76066">
    <property type="pathway name" value="RNA Polymerase III Transcription Initiation From Type 2 Promoter"/>
</dbReference>
<dbReference type="PRO" id="PR:O13650"/>
<dbReference type="Proteomes" id="UP000002485">
    <property type="component" value="Chromosome II"/>
</dbReference>
<dbReference type="GO" id="GO:0005634">
    <property type="term" value="C:nucleus"/>
    <property type="evidence" value="ECO:0007005"/>
    <property type="project" value="PomBase"/>
</dbReference>
<dbReference type="GO" id="GO:0000127">
    <property type="term" value="C:transcription factor TFIIIC complex"/>
    <property type="evidence" value="ECO:0000318"/>
    <property type="project" value="GO_Central"/>
</dbReference>
<dbReference type="GO" id="GO:0004402">
    <property type="term" value="F:histone acetyltransferase activity"/>
    <property type="evidence" value="ECO:0007669"/>
    <property type="project" value="InterPro"/>
</dbReference>
<dbReference type="GO" id="GO:0000995">
    <property type="term" value="F:RNA polymerase III general transcription initiation factor activity"/>
    <property type="evidence" value="ECO:0000305"/>
    <property type="project" value="PomBase"/>
</dbReference>
<dbReference type="GO" id="GO:0006383">
    <property type="term" value="P:transcription by RNA polymerase III"/>
    <property type="evidence" value="ECO:0000250"/>
    <property type="project" value="PomBase"/>
</dbReference>
<dbReference type="GO" id="GO:0006384">
    <property type="term" value="P:transcription initiation at RNA polymerase III promoter"/>
    <property type="evidence" value="ECO:0007669"/>
    <property type="project" value="InterPro"/>
</dbReference>
<dbReference type="InterPro" id="IPR044230">
    <property type="entry name" value="GTF3C4"/>
</dbReference>
<dbReference type="InterPro" id="IPR024761">
    <property type="entry name" value="TFIIIC_delta_N"/>
</dbReference>
<dbReference type="InterPro" id="IPR024764">
    <property type="entry name" value="TFIIIC_Znf"/>
</dbReference>
<dbReference type="InterPro" id="IPR036322">
    <property type="entry name" value="WD40_repeat_dom_sf"/>
</dbReference>
<dbReference type="PANTHER" id="PTHR15496:SF2">
    <property type="entry name" value="GENERAL TRANSCRIPTION FACTOR 3C POLYPEPTIDE 4"/>
    <property type="match status" value="1"/>
</dbReference>
<dbReference type="PANTHER" id="PTHR15496">
    <property type="entry name" value="GENERAL TRANSCRIPTION FACTOR 3C POLYPEPTIDE 4 FAMILY"/>
    <property type="match status" value="1"/>
</dbReference>
<dbReference type="Pfam" id="PF12657">
    <property type="entry name" value="TFIIIC_delta"/>
    <property type="match status" value="1"/>
</dbReference>
<dbReference type="Pfam" id="PF12660">
    <property type="entry name" value="zf-TFIIIC"/>
    <property type="match status" value="1"/>
</dbReference>
<dbReference type="SUPFAM" id="SSF50978">
    <property type="entry name" value="WD40 repeat-like"/>
    <property type="match status" value="1"/>
</dbReference>
<organism>
    <name type="scientific">Schizosaccharomyces pombe (strain 972 / ATCC 24843)</name>
    <name type="common">Fission yeast</name>
    <dbReference type="NCBI Taxonomy" id="284812"/>
    <lineage>
        <taxon>Eukaryota</taxon>
        <taxon>Fungi</taxon>
        <taxon>Dikarya</taxon>
        <taxon>Ascomycota</taxon>
        <taxon>Taphrinomycotina</taxon>
        <taxon>Schizosaccharomycetes</taxon>
        <taxon>Schizosaccharomycetales</taxon>
        <taxon>Schizosaccharomycetaceae</taxon>
        <taxon>Schizosaccharomyces</taxon>
    </lineage>
</organism>
<comment type="subunit">
    <text evidence="3">May be a component of the TFIIIC complex.</text>
</comment>
<comment type="subcellular location">
    <subcellularLocation>
        <location evidence="2">Nucleus</location>
    </subcellularLocation>
</comment>
<comment type="sequence caution" evidence="3">
    <conflict type="erroneous gene model prediction">
        <sequence resource="EMBL-CDS" id="BAA21438"/>
    </conflict>
</comment>
<feature type="chain" id="PRO_0000361655" description="Putative transcription factor tau subunit sfc9">
    <location>
        <begin position="1"/>
        <end position="673"/>
    </location>
</feature>
<feature type="sequence conflict" description="In Ref. 1; BAA21438." evidence="3" ref="1">
    <original>P</original>
    <variation>R</variation>
    <location>
        <position position="69"/>
    </location>
</feature>
<feature type="sequence conflict" description="In Ref. 1; BAA21438." evidence="3" ref="1">
    <original>D</original>
    <variation>E</variation>
    <location>
        <position position="98"/>
    </location>
</feature>
<keyword id="KW-0539">Nucleus</keyword>
<keyword id="KW-1185">Reference proteome</keyword>
<keyword id="KW-0804">Transcription</keyword>
<keyword id="KW-0805">Transcription regulation</keyword>
<sequence>MGKDVALDFLPSSLYSCTCSCDGKLAFCDSEKVQILVPSTEANTPKFMKALAYLDDVEDELPNCQMLAPNELRLGDLTPSVISRYVVWSPTGLADNYDPLLTVLTNRHRVYFFSSSSRVLHQKWTCVAQMSTHLPSDPLELCRIHSVAWSPLVSLPSSSPWGVCLFALGAESGHVHLSIMSHSSTPFFKSFDLNCSWVVQLSFSSWNVVGDSATCLLSCSSRNGEIRILKIAISSHSDTFDTAMQELPFSLDYRPFSPLLAWSSPLANVEYLALVYPGHLFAFRYDKSLGKFCSFLNHNLLSLCSPSGVLFGHNDIDTIYVYILTHSGTLETFSLLDNSISMLDSPERHVLEKFLNNHLQNYGSVSDDSIKTLKIHGFCPSPYLSSAALHFSISYPASFTYVVTAAERSYFNFIPSLFSKSVFSHMITSSLNNLCVAPSAGCLLEISLMNDTLKEKTDIFTMLTNSLSSFLVTDYDFFLELKHLIDISSLSNLYLDSSLNAMRLLYGWSVYKQKALDATLLNSLRYRLTLYIMLYTLSQISLDPSYLTSDCKAVLRNFVSFTYKELAEVPIAMEVANEIAKSLEVSSDFSETCPACEATVQFNNTSLATCDNGHVWRRCSVTMLLLSQKAAKYCAVCNSIVAIFNPSQTKCLLADLQNELSICFYCGGHFLVS</sequence>
<name>SFC9_SCHPO</name>